<sequence length="85" mass="10937">RKRLFYRYYSHPGNYMYLGHYGRYYNMLHNCNAMLLAHQMQAMRRYQHRMRVKQMYRRIKMKQMYRHMKWMGMYRQAKAARLRCI</sequence>
<protein>
    <recommendedName>
        <fullName>Turripeptide PaIAa</fullName>
    </recommendedName>
    <component>
        <recommendedName>
            <fullName>Turripeptide PaIAb</fullName>
        </recommendedName>
    </component>
</protein>
<proteinExistence type="evidence at protein level"/>
<evidence type="ECO:0000269" key="1">
    <source>
    </source>
</evidence>
<evidence type="ECO:0000305" key="2"/>
<keyword id="KW-0903">Direct protein sequencing</keyword>
<keyword id="KW-0964">Secreted</keyword>
<keyword id="KW-0800">Toxin</keyword>
<comment type="function">
    <text>Is lethal to drosophila larvae.</text>
</comment>
<comment type="subcellular location">
    <subcellularLocation>
        <location>Secreted</location>
    </subcellularLocation>
</comment>
<comment type="tissue specificity">
    <text>Expressed by the venom duct.</text>
</comment>
<comment type="mass spectrometry" mass="11869.7" method="MALDI" evidence="1">
    <molecule>Turripeptide PaIAa</molecule>
</comment>
<comment type="mass spectrometry" mass="10862.2" method="MALDI" evidence="1">
    <molecule>Turripeptide PaIAb</molecule>
</comment>
<comment type="miscellaneous">
    <text>Turritoxin PaIAb was only sequenced until Met-61.</text>
</comment>
<comment type="similarity">
    <text evidence="2">Belongs to the turripeptide family.</text>
</comment>
<organism>
    <name type="scientific">Polystira albida</name>
    <name type="common">White giant-turris</name>
    <name type="synonym">Pleurotoma albida</name>
    <dbReference type="NCBI Taxonomy" id="394106"/>
    <lineage>
        <taxon>Eukaryota</taxon>
        <taxon>Metazoa</taxon>
        <taxon>Spiralia</taxon>
        <taxon>Lophotrochozoa</taxon>
        <taxon>Mollusca</taxon>
        <taxon>Gastropoda</taxon>
        <taxon>Caenogastropoda</taxon>
        <taxon>Neogastropoda</taxon>
        <taxon>Conoidea</taxon>
        <taxon>Turridae</taxon>
        <taxon>Polystira</taxon>
    </lineage>
</organism>
<reference key="1">
    <citation type="journal article" date="2004" name="Toxicon">
        <title>A novel structural class of toxins: the methionine-rich peptides from the venoms of turrid marine snails (Mollusca, Conoidea).</title>
        <authorList>
            <person name="Lopez-Vera E."/>
            <person name="Heimer de la Cotera E.P."/>
            <person name="Maillo M."/>
            <person name="Riesgo-Escovar J.R."/>
            <person name="Olivera B.M."/>
            <person name="Aguilar M.B."/>
        </authorList>
    </citation>
    <scope>PROTEIN SEQUENCE</scope>
    <scope>MASS SPECTROMETRY</scope>
    <source>
        <tissue>Venom</tissue>
    </source>
</reference>
<name>TUXA_POLAB</name>
<feature type="chain" id="PRO_0000249808" description="Turripeptide PaIAa">
    <location>
        <begin position="1"/>
        <end position="85" status="greater than"/>
    </location>
</feature>
<feature type="chain" id="PRO_0000249809" description="Turripeptide PaIAb">
    <location>
        <begin position="8"/>
        <end position="85" status="greater than"/>
    </location>
</feature>
<feature type="non-terminal residue">
    <location>
        <position position="85"/>
    </location>
</feature>
<accession>P0C1X4</accession>
<dbReference type="GO" id="GO:0005576">
    <property type="term" value="C:extracellular region"/>
    <property type="evidence" value="ECO:0007669"/>
    <property type="project" value="UniProtKB-SubCell"/>
</dbReference>
<dbReference type="GO" id="GO:0090729">
    <property type="term" value="F:toxin activity"/>
    <property type="evidence" value="ECO:0007669"/>
    <property type="project" value="UniProtKB-KW"/>
</dbReference>